<accession>A1V1G7</accession>
<proteinExistence type="inferred from homology"/>
<name>URE2_BURMS</name>
<gene>
    <name evidence="1" type="primary">ureB</name>
    <name type="ordered locus">BMASAVP1_A0724</name>
</gene>
<keyword id="KW-0963">Cytoplasm</keyword>
<keyword id="KW-0378">Hydrolase</keyword>
<sequence>MIPGELVIDDGEHTLNAGRHTIALVVANTGDRPVQVGSHYHFHEVNDALSFDRAAARGFRLNIAAGTAVRFEPGQTRTVELVELGGARAVYGFQGKVMGPL</sequence>
<reference key="1">
    <citation type="journal article" date="2010" name="Genome Biol. Evol.">
        <title>Continuing evolution of Burkholderia mallei through genome reduction and large-scale rearrangements.</title>
        <authorList>
            <person name="Losada L."/>
            <person name="Ronning C.M."/>
            <person name="DeShazer D."/>
            <person name="Woods D."/>
            <person name="Fedorova N."/>
            <person name="Kim H.S."/>
            <person name="Shabalina S.A."/>
            <person name="Pearson T.R."/>
            <person name="Brinkac L."/>
            <person name="Tan P."/>
            <person name="Nandi T."/>
            <person name="Crabtree J."/>
            <person name="Badger J."/>
            <person name="Beckstrom-Sternberg S."/>
            <person name="Saqib M."/>
            <person name="Schutzer S.E."/>
            <person name="Keim P."/>
            <person name="Nierman W.C."/>
        </authorList>
    </citation>
    <scope>NUCLEOTIDE SEQUENCE [LARGE SCALE GENOMIC DNA]</scope>
    <source>
        <strain>SAVP1</strain>
    </source>
</reference>
<organism>
    <name type="scientific">Burkholderia mallei (strain SAVP1)</name>
    <dbReference type="NCBI Taxonomy" id="320388"/>
    <lineage>
        <taxon>Bacteria</taxon>
        <taxon>Pseudomonadati</taxon>
        <taxon>Pseudomonadota</taxon>
        <taxon>Betaproteobacteria</taxon>
        <taxon>Burkholderiales</taxon>
        <taxon>Burkholderiaceae</taxon>
        <taxon>Burkholderia</taxon>
        <taxon>pseudomallei group</taxon>
    </lineage>
</organism>
<feature type="chain" id="PRO_1000070724" description="Urease subunit beta">
    <location>
        <begin position="1"/>
        <end position="101"/>
    </location>
</feature>
<comment type="catalytic activity">
    <reaction evidence="1">
        <text>urea + 2 H2O + H(+) = hydrogencarbonate + 2 NH4(+)</text>
        <dbReference type="Rhea" id="RHEA:20557"/>
        <dbReference type="ChEBI" id="CHEBI:15377"/>
        <dbReference type="ChEBI" id="CHEBI:15378"/>
        <dbReference type="ChEBI" id="CHEBI:16199"/>
        <dbReference type="ChEBI" id="CHEBI:17544"/>
        <dbReference type="ChEBI" id="CHEBI:28938"/>
        <dbReference type="EC" id="3.5.1.5"/>
    </reaction>
</comment>
<comment type="pathway">
    <text evidence="1">Nitrogen metabolism; urea degradation; CO(2) and NH(3) from urea (urease route): step 1/1.</text>
</comment>
<comment type="subunit">
    <text evidence="1">Heterotrimer of UreA (gamma), UreB (beta) and UreC (alpha) subunits. Three heterotrimers associate to form the active enzyme.</text>
</comment>
<comment type="subcellular location">
    <subcellularLocation>
        <location evidence="1">Cytoplasm</location>
    </subcellularLocation>
</comment>
<comment type="similarity">
    <text evidence="1">Belongs to the urease beta subunit family.</text>
</comment>
<dbReference type="EC" id="3.5.1.5" evidence="1"/>
<dbReference type="EMBL" id="CP000526">
    <property type="protein sequence ID" value="ABM50095.1"/>
    <property type="molecule type" value="Genomic_DNA"/>
</dbReference>
<dbReference type="RefSeq" id="WP_004186466.1">
    <property type="nucleotide sequence ID" value="NC_008785.1"/>
</dbReference>
<dbReference type="SMR" id="A1V1G7"/>
<dbReference type="KEGG" id="bmv:BMASAVP1_A0724"/>
<dbReference type="HOGENOM" id="CLU_129707_1_1_4"/>
<dbReference type="UniPathway" id="UPA00258">
    <property type="reaction ID" value="UER00370"/>
</dbReference>
<dbReference type="GO" id="GO:0035550">
    <property type="term" value="C:urease complex"/>
    <property type="evidence" value="ECO:0007669"/>
    <property type="project" value="InterPro"/>
</dbReference>
<dbReference type="GO" id="GO:0009039">
    <property type="term" value="F:urease activity"/>
    <property type="evidence" value="ECO:0007669"/>
    <property type="project" value="UniProtKB-UniRule"/>
</dbReference>
<dbReference type="GO" id="GO:0043419">
    <property type="term" value="P:urea catabolic process"/>
    <property type="evidence" value="ECO:0007669"/>
    <property type="project" value="UniProtKB-UniRule"/>
</dbReference>
<dbReference type="CDD" id="cd00407">
    <property type="entry name" value="Urease_beta"/>
    <property type="match status" value="1"/>
</dbReference>
<dbReference type="FunFam" id="2.10.150.10:FF:000001">
    <property type="entry name" value="Urease subunit beta"/>
    <property type="match status" value="1"/>
</dbReference>
<dbReference type="Gene3D" id="2.10.150.10">
    <property type="entry name" value="Urease, beta subunit"/>
    <property type="match status" value="1"/>
</dbReference>
<dbReference type="HAMAP" id="MF_01954">
    <property type="entry name" value="Urease_beta"/>
    <property type="match status" value="1"/>
</dbReference>
<dbReference type="InterPro" id="IPR002019">
    <property type="entry name" value="Urease_beta-like"/>
</dbReference>
<dbReference type="InterPro" id="IPR036461">
    <property type="entry name" value="Urease_betasu_sf"/>
</dbReference>
<dbReference type="InterPro" id="IPR050069">
    <property type="entry name" value="Urease_subunit"/>
</dbReference>
<dbReference type="NCBIfam" id="NF009682">
    <property type="entry name" value="PRK13203.1"/>
    <property type="match status" value="1"/>
</dbReference>
<dbReference type="NCBIfam" id="TIGR00192">
    <property type="entry name" value="urease_beta"/>
    <property type="match status" value="1"/>
</dbReference>
<dbReference type="PANTHER" id="PTHR33569">
    <property type="entry name" value="UREASE"/>
    <property type="match status" value="1"/>
</dbReference>
<dbReference type="PANTHER" id="PTHR33569:SF1">
    <property type="entry name" value="UREASE"/>
    <property type="match status" value="1"/>
</dbReference>
<dbReference type="Pfam" id="PF00699">
    <property type="entry name" value="Urease_beta"/>
    <property type="match status" value="1"/>
</dbReference>
<dbReference type="SUPFAM" id="SSF51278">
    <property type="entry name" value="Urease, beta-subunit"/>
    <property type="match status" value="1"/>
</dbReference>
<evidence type="ECO:0000255" key="1">
    <source>
        <dbReference type="HAMAP-Rule" id="MF_01954"/>
    </source>
</evidence>
<protein>
    <recommendedName>
        <fullName evidence="1">Urease subunit beta</fullName>
        <ecNumber evidence="1">3.5.1.5</ecNumber>
    </recommendedName>
    <alternativeName>
        <fullName evidence="1">Urea amidohydrolase subunit beta</fullName>
    </alternativeName>
</protein>